<proteinExistence type="inferred from homology"/>
<sequence length="675" mass="74957">MSLPKKLEEMQVEEASKLAQNLREILDRWSKLYYTKDAPEVEDYEYDEKYADLVALEEAFPEIITQDSITQRVGGEILEGFTKVTHTEPMLSMGDVFSRDELVEFDNRIQKNVGHPVDYNVELKIDGLAISLIYQDGELIQGSTRGDGNIGEDITKNLKTIKSVPQKLTRPLSIEVRGECFMPKASFAKLNAQQLEDGKPVFANPRNAAAGSLRQLNTNVTKKRDLDTFIYTVVDSNQLGAKTQHQAIQMMAELGFNTNPTQEVCANLDEVWDYIAKYEGQREDLPYGIDGIVLKVNDLSLQQELGHTVKIPRWEIAYKFPPEEAATVVRDIEWTVGRTGVVTPTAVMDPVQLAGTTVSRATLNNVDQLTAKDVHIGDTVLLHKAGDIIPEITRVVLEKRPVGISELDIPTHCPSCGKELVHLNGEVALRCINPDCPAQIVARLEHFGSRNAMNIMGLGPKQIQQLYAKNFIHHFDDLYKLTSEELSQLDGFKEKRVNNLLEAIDNSRKNSLERLINGLGIQGVGTKMARTLAEKFGTMDNLMQTTIEEFDAVDTIGETLANNLATFFQSDVAQNMIDELKAVGVNMEYLGVKPAESPDGYYKGKKVVLTGKLEQYTRNELKERLISLGADVAGSVSKKTDILIAGADAGSKLTKAQALGIEILDETEAIAKFEQ</sequence>
<protein>
    <recommendedName>
        <fullName evidence="1">DNA ligase</fullName>
        <ecNumber evidence="1">6.5.1.2</ecNumber>
    </recommendedName>
    <alternativeName>
        <fullName evidence="1">Polydeoxyribonucleotide synthase [NAD(+)]</fullName>
    </alternativeName>
</protein>
<keyword id="KW-0227">DNA damage</keyword>
<keyword id="KW-0234">DNA repair</keyword>
<keyword id="KW-0235">DNA replication</keyword>
<keyword id="KW-0436">Ligase</keyword>
<keyword id="KW-0460">Magnesium</keyword>
<keyword id="KW-0464">Manganese</keyword>
<keyword id="KW-0479">Metal-binding</keyword>
<keyword id="KW-0520">NAD</keyword>
<keyword id="KW-0862">Zinc</keyword>
<reference key="1">
    <citation type="journal article" date="2006" name="Proc. Natl. Acad. Sci. U.S.A.">
        <title>Comparative genomics of the lactic acid bacteria.</title>
        <authorList>
            <person name="Makarova K.S."/>
            <person name="Slesarev A."/>
            <person name="Wolf Y.I."/>
            <person name="Sorokin A."/>
            <person name="Mirkin B."/>
            <person name="Koonin E.V."/>
            <person name="Pavlov A."/>
            <person name="Pavlova N."/>
            <person name="Karamychev V."/>
            <person name="Polouchine N."/>
            <person name="Shakhova V."/>
            <person name="Grigoriev I."/>
            <person name="Lou Y."/>
            <person name="Rohksar D."/>
            <person name="Lucas S."/>
            <person name="Huang K."/>
            <person name="Goodstein D.M."/>
            <person name="Hawkins T."/>
            <person name="Plengvidhya V."/>
            <person name="Welker D."/>
            <person name="Hughes J."/>
            <person name="Goh Y."/>
            <person name="Benson A."/>
            <person name="Baldwin K."/>
            <person name="Lee J.-H."/>
            <person name="Diaz-Muniz I."/>
            <person name="Dosti B."/>
            <person name="Smeianov V."/>
            <person name="Wechter W."/>
            <person name="Barabote R."/>
            <person name="Lorca G."/>
            <person name="Altermann E."/>
            <person name="Barrangou R."/>
            <person name="Ganesan B."/>
            <person name="Xie Y."/>
            <person name="Rawsthorne H."/>
            <person name="Tamir D."/>
            <person name="Parker C."/>
            <person name="Breidt F."/>
            <person name="Broadbent J.R."/>
            <person name="Hutkins R."/>
            <person name="O'Sullivan D."/>
            <person name="Steele J."/>
            <person name="Unlu G."/>
            <person name="Saier M.H. Jr."/>
            <person name="Klaenhammer T."/>
            <person name="Richardson P."/>
            <person name="Kozyavkin S."/>
            <person name="Weimer B.C."/>
            <person name="Mills D.A."/>
        </authorList>
    </citation>
    <scope>NUCLEOTIDE SEQUENCE [LARGE SCALE GENOMIC DNA]</scope>
    <source>
        <strain>ATCC 25745 / CCUG 21536 / LMG 10740 / 183-1w</strain>
    </source>
</reference>
<name>DNLJ_PEDPA</name>
<gene>
    <name evidence="1" type="primary">ligA</name>
    <name type="ordered locus">PEPE_1612</name>
</gene>
<organism>
    <name type="scientific">Pediococcus pentosaceus (strain ATCC 25745 / CCUG 21536 / LMG 10740 / 183-1w)</name>
    <dbReference type="NCBI Taxonomy" id="278197"/>
    <lineage>
        <taxon>Bacteria</taxon>
        <taxon>Bacillati</taxon>
        <taxon>Bacillota</taxon>
        <taxon>Bacilli</taxon>
        <taxon>Lactobacillales</taxon>
        <taxon>Lactobacillaceae</taxon>
        <taxon>Pediococcus</taxon>
    </lineage>
</organism>
<comment type="function">
    <text evidence="1">DNA ligase that catalyzes the formation of phosphodiester linkages between 5'-phosphoryl and 3'-hydroxyl groups in double-stranded DNA using NAD as a coenzyme and as the energy source for the reaction. It is essential for DNA replication and repair of damaged DNA.</text>
</comment>
<comment type="catalytic activity">
    <reaction evidence="1">
        <text>NAD(+) + (deoxyribonucleotide)n-3'-hydroxyl + 5'-phospho-(deoxyribonucleotide)m = (deoxyribonucleotide)n+m + AMP + beta-nicotinamide D-nucleotide.</text>
        <dbReference type="EC" id="6.5.1.2"/>
    </reaction>
</comment>
<comment type="cofactor">
    <cofactor evidence="1">
        <name>Mg(2+)</name>
        <dbReference type="ChEBI" id="CHEBI:18420"/>
    </cofactor>
    <cofactor evidence="1">
        <name>Mn(2+)</name>
        <dbReference type="ChEBI" id="CHEBI:29035"/>
    </cofactor>
</comment>
<comment type="similarity">
    <text evidence="1">Belongs to the NAD-dependent DNA ligase family. LigA subfamily.</text>
</comment>
<accession>Q03DT9</accession>
<dbReference type="EC" id="6.5.1.2" evidence="1"/>
<dbReference type="EMBL" id="CP000422">
    <property type="protein sequence ID" value="ABJ68633.1"/>
    <property type="molecule type" value="Genomic_DNA"/>
</dbReference>
<dbReference type="RefSeq" id="WP_011673762.1">
    <property type="nucleotide sequence ID" value="NC_008525.1"/>
</dbReference>
<dbReference type="SMR" id="Q03DT9"/>
<dbReference type="STRING" id="278197.PEPE_1612"/>
<dbReference type="GeneID" id="33062505"/>
<dbReference type="KEGG" id="ppe:PEPE_1612"/>
<dbReference type="eggNOG" id="COG0272">
    <property type="taxonomic scope" value="Bacteria"/>
</dbReference>
<dbReference type="HOGENOM" id="CLU_007764_2_1_9"/>
<dbReference type="OrthoDB" id="9759736at2"/>
<dbReference type="Proteomes" id="UP000000773">
    <property type="component" value="Chromosome"/>
</dbReference>
<dbReference type="GO" id="GO:0005829">
    <property type="term" value="C:cytosol"/>
    <property type="evidence" value="ECO:0007669"/>
    <property type="project" value="TreeGrafter"/>
</dbReference>
<dbReference type="GO" id="GO:0003677">
    <property type="term" value="F:DNA binding"/>
    <property type="evidence" value="ECO:0007669"/>
    <property type="project" value="InterPro"/>
</dbReference>
<dbReference type="GO" id="GO:0003911">
    <property type="term" value="F:DNA ligase (NAD+) activity"/>
    <property type="evidence" value="ECO:0007669"/>
    <property type="project" value="UniProtKB-UniRule"/>
</dbReference>
<dbReference type="GO" id="GO:0046872">
    <property type="term" value="F:metal ion binding"/>
    <property type="evidence" value="ECO:0007669"/>
    <property type="project" value="UniProtKB-KW"/>
</dbReference>
<dbReference type="GO" id="GO:0006281">
    <property type="term" value="P:DNA repair"/>
    <property type="evidence" value="ECO:0007669"/>
    <property type="project" value="UniProtKB-KW"/>
</dbReference>
<dbReference type="GO" id="GO:0006260">
    <property type="term" value="P:DNA replication"/>
    <property type="evidence" value="ECO:0007669"/>
    <property type="project" value="UniProtKB-KW"/>
</dbReference>
<dbReference type="CDD" id="cd17748">
    <property type="entry name" value="BRCT_DNA_ligase_like"/>
    <property type="match status" value="1"/>
</dbReference>
<dbReference type="CDD" id="cd00114">
    <property type="entry name" value="LIGANc"/>
    <property type="match status" value="1"/>
</dbReference>
<dbReference type="FunFam" id="1.10.150.20:FF:000006">
    <property type="entry name" value="DNA ligase"/>
    <property type="match status" value="1"/>
</dbReference>
<dbReference type="FunFam" id="1.10.150.20:FF:000007">
    <property type="entry name" value="DNA ligase"/>
    <property type="match status" value="1"/>
</dbReference>
<dbReference type="FunFam" id="2.40.50.140:FF:000012">
    <property type="entry name" value="DNA ligase"/>
    <property type="match status" value="1"/>
</dbReference>
<dbReference type="FunFam" id="3.30.470.30:FF:000001">
    <property type="entry name" value="DNA ligase"/>
    <property type="match status" value="1"/>
</dbReference>
<dbReference type="Gene3D" id="6.20.10.30">
    <property type="match status" value="1"/>
</dbReference>
<dbReference type="Gene3D" id="1.10.150.20">
    <property type="entry name" value="5' to 3' exonuclease, C-terminal subdomain"/>
    <property type="match status" value="2"/>
</dbReference>
<dbReference type="Gene3D" id="3.40.50.10190">
    <property type="entry name" value="BRCT domain"/>
    <property type="match status" value="1"/>
</dbReference>
<dbReference type="Gene3D" id="3.30.470.30">
    <property type="entry name" value="DNA ligase/mRNA capping enzyme"/>
    <property type="match status" value="1"/>
</dbReference>
<dbReference type="Gene3D" id="1.10.287.610">
    <property type="entry name" value="Helix hairpin bin"/>
    <property type="match status" value="1"/>
</dbReference>
<dbReference type="Gene3D" id="2.40.50.140">
    <property type="entry name" value="Nucleic acid-binding proteins"/>
    <property type="match status" value="1"/>
</dbReference>
<dbReference type="HAMAP" id="MF_01588">
    <property type="entry name" value="DNA_ligase_A"/>
    <property type="match status" value="1"/>
</dbReference>
<dbReference type="InterPro" id="IPR001357">
    <property type="entry name" value="BRCT_dom"/>
</dbReference>
<dbReference type="InterPro" id="IPR036420">
    <property type="entry name" value="BRCT_dom_sf"/>
</dbReference>
<dbReference type="InterPro" id="IPR041663">
    <property type="entry name" value="DisA/LigA_HHH"/>
</dbReference>
<dbReference type="InterPro" id="IPR001679">
    <property type="entry name" value="DNA_ligase"/>
</dbReference>
<dbReference type="InterPro" id="IPR018239">
    <property type="entry name" value="DNA_ligase_AS"/>
</dbReference>
<dbReference type="InterPro" id="IPR033136">
    <property type="entry name" value="DNA_ligase_CS"/>
</dbReference>
<dbReference type="InterPro" id="IPR013839">
    <property type="entry name" value="DNAligase_adenylation"/>
</dbReference>
<dbReference type="InterPro" id="IPR013840">
    <property type="entry name" value="DNAligase_N"/>
</dbReference>
<dbReference type="InterPro" id="IPR003583">
    <property type="entry name" value="Hlx-hairpin-Hlx_DNA-bd_motif"/>
</dbReference>
<dbReference type="InterPro" id="IPR012340">
    <property type="entry name" value="NA-bd_OB-fold"/>
</dbReference>
<dbReference type="InterPro" id="IPR004150">
    <property type="entry name" value="NAD_DNA_ligase_OB"/>
</dbReference>
<dbReference type="InterPro" id="IPR010994">
    <property type="entry name" value="RuvA_2-like"/>
</dbReference>
<dbReference type="InterPro" id="IPR004149">
    <property type="entry name" value="Znf_DNAligase_C4"/>
</dbReference>
<dbReference type="NCBIfam" id="TIGR00575">
    <property type="entry name" value="dnlj"/>
    <property type="match status" value="1"/>
</dbReference>
<dbReference type="NCBIfam" id="NF005932">
    <property type="entry name" value="PRK07956.1"/>
    <property type="match status" value="1"/>
</dbReference>
<dbReference type="PANTHER" id="PTHR23389">
    <property type="entry name" value="CHROMOSOME TRANSMISSION FIDELITY FACTOR 18"/>
    <property type="match status" value="1"/>
</dbReference>
<dbReference type="PANTHER" id="PTHR23389:SF9">
    <property type="entry name" value="DNA LIGASE"/>
    <property type="match status" value="1"/>
</dbReference>
<dbReference type="Pfam" id="PF00533">
    <property type="entry name" value="BRCT"/>
    <property type="match status" value="1"/>
</dbReference>
<dbReference type="Pfam" id="PF01653">
    <property type="entry name" value="DNA_ligase_aden"/>
    <property type="match status" value="1"/>
</dbReference>
<dbReference type="Pfam" id="PF03120">
    <property type="entry name" value="DNA_ligase_OB"/>
    <property type="match status" value="1"/>
</dbReference>
<dbReference type="Pfam" id="PF03119">
    <property type="entry name" value="DNA_ligase_ZBD"/>
    <property type="match status" value="1"/>
</dbReference>
<dbReference type="Pfam" id="PF12826">
    <property type="entry name" value="HHH_2"/>
    <property type="match status" value="1"/>
</dbReference>
<dbReference type="Pfam" id="PF14520">
    <property type="entry name" value="HHH_5"/>
    <property type="match status" value="1"/>
</dbReference>
<dbReference type="PIRSF" id="PIRSF001604">
    <property type="entry name" value="LigA"/>
    <property type="match status" value="1"/>
</dbReference>
<dbReference type="SMART" id="SM00292">
    <property type="entry name" value="BRCT"/>
    <property type="match status" value="1"/>
</dbReference>
<dbReference type="SMART" id="SM00278">
    <property type="entry name" value="HhH1"/>
    <property type="match status" value="4"/>
</dbReference>
<dbReference type="SMART" id="SM00532">
    <property type="entry name" value="LIGANc"/>
    <property type="match status" value="1"/>
</dbReference>
<dbReference type="SUPFAM" id="SSF52113">
    <property type="entry name" value="BRCT domain"/>
    <property type="match status" value="1"/>
</dbReference>
<dbReference type="SUPFAM" id="SSF56091">
    <property type="entry name" value="DNA ligase/mRNA capping enzyme, catalytic domain"/>
    <property type="match status" value="1"/>
</dbReference>
<dbReference type="SUPFAM" id="SSF50249">
    <property type="entry name" value="Nucleic acid-binding proteins"/>
    <property type="match status" value="1"/>
</dbReference>
<dbReference type="SUPFAM" id="SSF47781">
    <property type="entry name" value="RuvA domain 2-like"/>
    <property type="match status" value="1"/>
</dbReference>
<dbReference type="PROSITE" id="PS50172">
    <property type="entry name" value="BRCT"/>
    <property type="match status" value="1"/>
</dbReference>
<dbReference type="PROSITE" id="PS01055">
    <property type="entry name" value="DNA_LIGASE_N1"/>
    <property type="match status" value="1"/>
</dbReference>
<dbReference type="PROSITE" id="PS01056">
    <property type="entry name" value="DNA_LIGASE_N2"/>
    <property type="match status" value="1"/>
</dbReference>
<feature type="chain" id="PRO_0000313354" description="DNA ligase">
    <location>
        <begin position="1"/>
        <end position="675"/>
    </location>
</feature>
<feature type="domain" description="BRCT" evidence="1">
    <location>
        <begin position="597"/>
        <end position="675"/>
    </location>
</feature>
<feature type="active site" description="N6-AMP-lysine intermediate" evidence="1">
    <location>
        <position position="124"/>
    </location>
</feature>
<feature type="binding site" evidence="1">
    <location>
        <begin position="43"/>
        <end position="47"/>
    </location>
    <ligand>
        <name>NAD(+)</name>
        <dbReference type="ChEBI" id="CHEBI:57540"/>
    </ligand>
</feature>
<feature type="binding site" evidence="1">
    <location>
        <begin position="92"/>
        <end position="93"/>
    </location>
    <ligand>
        <name>NAD(+)</name>
        <dbReference type="ChEBI" id="CHEBI:57540"/>
    </ligand>
</feature>
<feature type="binding site" evidence="1">
    <location>
        <position position="122"/>
    </location>
    <ligand>
        <name>NAD(+)</name>
        <dbReference type="ChEBI" id="CHEBI:57540"/>
    </ligand>
</feature>
<feature type="binding site" evidence="1">
    <location>
        <position position="145"/>
    </location>
    <ligand>
        <name>NAD(+)</name>
        <dbReference type="ChEBI" id="CHEBI:57540"/>
    </ligand>
</feature>
<feature type="binding site" evidence="1">
    <location>
        <position position="179"/>
    </location>
    <ligand>
        <name>NAD(+)</name>
        <dbReference type="ChEBI" id="CHEBI:57540"/>
    </ligand>
</feature>
<feature type="binding site" evidence="1">
    <location>
        <position position="295"/>
    </location>
    <ligand>
        <name>NAD(+)</name>
        <dbReference type="ChEBI" id="CHEBI:57540"/>
    </ligand>
</feature>
<feature type="binding site" evidence="1">
    <location>
        <position position="319"/>
    </location>
    <ligand>
        <name>NAD(+)</name>
        <dbReference type="ChEBI" id="CHEBI:57540"/>
    </ligand>
</feature>
<feature type="binding site" evidence="1">
    <location>
        <position position="413"/>
    </location>
    <ligand>
        <name>Zn(2+)</name>
        <dbReference type="ChEBI" id="CHEBI:29105"/>
    </ligand>
</feature>
<feature type="binding site" evidence="1">
    <location>
        <position position="416"/>
    </location>
    <ligand>
        <name>Zn(2+)</name>
        <dbReference type="ChEBI" id="CHEBI:29105"/>
    </ligand>
</feature>
<feature type="binding site" evidence="1">
    <location>
        <position position="431"/>
    </location>
    <ligand>
        <name>Zn(2+)</name>
        <dbReference type="ChEBI" id="CHEBI:29105"/>
    </ligand>
</feature>
<feature type="binding site" evidence="1">
    <location>
        <position position="436"/>
    </location>
    <ligand>
        <name>Zn(2+)</name>
        <dbReference type="ChEBI" id="CHEBI:29105"/>
    </ligand>
</feature>
<evidence type="ECO:0000255" key="1">
    <source>
        <dbReference type="HAMAP-Rule" id="MF_01588"/>
    </source>
</evidence>